<gene>
    <name evidence="4" type="primary">NNR1</name>
    <name type="ordered locus">YNL200C</name>
    <name type="ORF">N1370</name>
</gene>
<accession>P40165</accession>
<accession>D6W0Y8</accession>
<protein>
    <recommendedName>
        <fullName evidence="1">NAD(P)H-hydrate epimerase</fullName>
        <ecNumber evidence="3">5.1.99.6</ecNumber>
    </recommendedName>
    <alternativeName>
        <fullName evidence="1">NAD(P)HX epimerase</fullName>
    </alternativeName>
    <alternativeName>
        <fullName evidence="4">Nicotinamide nucleotide repair protein 1</fullName>
    </alternativeName>
</protein>
<evidence type="ECO:0000255" key="1">
    <source>
        <dbReference type="HAMAP-Rule" id="MF_03159"/>
    </source>
</evidence>
<evidence type="ECO:0000269" key="2">
    <source>
    </source>
</evidence>
<evidence type="ECO:0000269" key="3">
    <source>
    </source>
</evidence>
<evidence type="ECO:0000303" key="4">
    <source ref="9"/>
</evidence>
<evidence type="ECO:0007829" key="5">
    <source>
        <dbReference type="PDB" id="1JZT"/>
    </source>
</evidence>
<organism>
    <name type="scientific">Saccharomyces cerevisiae (strain ATCC 204508 / S288c)</name>
    <name type="common">Baker's yeast</name>
    <dbReference type="NCBI Taxonomy" id="559292"/>
    <lineage>
        <taxon>Eukaryota</taxon>
        <taxon>Fungi</taxon>
        <taxon>Dikarya</taxon>
        <taxon>Ascomycota</taxon>
        <taxon>Saccharomycotina</taxon>
        <taxon>Saccharomycetes</taxon>
        <taxon>Saccharomycetales</taxon>
        <taxon>Saccharomycetaceae</taxon>
        <taxon>Saccharomyces</taxon>
    </lineage>
</organism>
<name>NNRE_YEAST</name>
<sequence length="246" mass="27521">MSTLKVVSSKLAAEIDKELMGPQIGFTLQQLMELAGFSVAQAVCRQFPLRGKTETEKGKHVFVIAGPGNNGGDGLVCARHLKLFGYNPVVFYPKRSERTEFYKQLVHQLNFFKVPVLSQDEGNWLEYLKPEKTLCIVDAIFGFSFKPPMREPFKGIVEELCKVQNIIPIVSVDVPTGWDVDKGPISQPSINPAVLVSLTVPKPCSSHIRENQTTHYVGGRFIPRDFANKFGFEPFGYESTDQILKL</sequence>
<reference key="1">
    <citation type="journal article" date="1994" name="Yeast">
        <title>A 21.7 kb DNA segment on the left arm of yeast chromosome XIV carries WHI3, GCR2, SPX18, SPX19, an homologue to the heat shock gene SSB1 and 8 new open reading frames of unknown function.</title>
        <authorList>
            <person name="Jonniaux J.-L."/>
            <person name="Coster F."/>
            <person name="Purnelle B."/>
            <person name="Goffeau A."/>
        </authorList>
    </citation>
    <scope>NUCLEOTIDE SEQUENCE [GENOMIC DNA]</scope>
    <source>
        <strain>ATCC 96604 / S288c / FY1679</strain>
    </source>
</reference>
<reference key="2">
    <citation type="journal article" date="1997" name="Nature">
        <title>The nucleotide sequence of Saccharomyces cerevisiae chromosome XIV and its evolutionary implications.</title>
        <authorList>
            <person name="Philippsen P."/>
            <person name="Kleine K."/>
            <person name="Poehlmann R."/>
            <person name="Duesterhoeft A."/>
            <person name="Hamberg K."/>
            <person name="Hegemann J.H."/>
            <person name="Obermaier B."/>
            <person name="Urrestarazu L.A."/>
            <person name="Aert R."/>
            <person name="Albermann K."/>
            <person name="Altmann R."/>
            <person name="Andre B."/>
            <person name="Baladron V."/>
            <person name="Ballesta J.P.G."/>
            <person name="Becam A.-M."/>
            <person name="Beinhauer J.D."/>
            <person name="Boskovic J."/>
            <person name="Buitrago M.J."/>
            <person name="Bussereau F."/>
            <person name="Coster F."/>
            <person name="Crouzet M."/>
            <person name="D'Angelo M."/>
            <person name="Dal Pero F."/>
            <person name="De Antoni A."/>
            <person name="del Rey F."/>
            <person name="Doignon F."/>
            <person name="Domdey H."/>
            <person name="Dubois E."/>
            <person name="Fiedler T.A."/>
            <person name="Fleig U."/>
            <person name="Floeth M."/>
            <person name="Fritz C."/>
            <person name="Gaillardin C."/>
            <person name="Garcia-Cantalejo J.M."/>
            <person name="Glansdorff N."/>
            <person name="Goffeau A."/>
            <person name="Gueldener U."/>
            <person name="Herbert C.J."/>
            <person name="Heumann K."/>
            <person name="Heuss-Neitzel D."/>
            <person name="Hilbert H."/>
            <person name="Hinni K."/>
            <person name="Iraqui Houssaini I."/>
            <person name="Jacquet M."/>
            <person name="Jimenez A."/>
            <person name="Jonniaux J.-L."/>
            <person name="Karpfinger-Hartl L."/>
            <person name="Lanfranchi G."/>
            <person name="Lepingle A."/>
            <person name="Levesque H."/>
            <person name="Lyck R."/>
            <person name="Maftahi M."/>
            <person name="Mallet L."/>
            <person name="Maurer C.T.C."/>
            <person name="Messenguy F."/>
            <person name="Mewes H.-W."/>
            <person name="Moestl D."/>
            <person name="Nasr F."/>
            <person name="Nicaud J.-M."/>
            <person name="Niedenthal R.K."/>
            <person name="Pandolfo D."/>
            <person name="Pierard A."/>
            <person name="Piravandi E."/>
            <person name="Planta R.J."/>
            <person name="Pohl T.M."/>
            <person name="Purnelle B."/>
            <person name="Rebischung C."/>
            <person name="Remacha M.A."/>
            <person name="Revuelta J.L."/>
            <person name="Rinke M."/>
            <person name="Saiz J.E."/>
            <person name="Sartorello F."/>
            <person name="Scherens B."/>
            <person name="Sen-Gupta M."/>
            <person name="Soler-Mira A."/>
            <person name="Urbanus J.H.M."/>
            <person name="Valle G."/>
            <person name="Van Dyck L."/>
            <person name="Verhasselt P."/>
            <person name="Vierendeels F."/>
            <person name="Vissers S."/>
            <person name="Voet M."/>
            <person name="Volckaert G."/>
            <person name="Wach A."/>
            <person name="Wambutt R."/>
            <person name="Wedler H."/>
            <person name="Zollner A."/>
            <person name="Hani J."/>
        </authorList>
    </citation>
    <scope>NUCLEOTIDE SEQUENCE [LARGE SCALE GENOMIC DNA]</scope>
    <source>
        <strain>ATCC 204508 / S288c</strain>
    </source>
</reference>
<reference key="3">
    <citation type="journal article" date="2014" name="G3 (Bethesda)">
        <title>The reference genome sequence of Saccharomyces cerevisiae: Then and now.</title>
        <authorList>
            <person name="Engel S.R."/>
            <person name="Dietrich F.S."/>
            <person name="Fisk D.G."/>
            <person name="Binkley G."/>
            <person name="Balakrishnan R."/>
            <person name="Costanzo M.C."/>
            <person name="Dwight S.S."/>
            <person name="Hitz B.C."/>
            <person name="Karra K."/>
            <person name="Nash R.S."/>
            <person name="Weng S."/>
            <person name="Wong E.D."/>
            <person name="Lloyd P."/>
            <person name="Skrzypek M.S."/>
            <person name="Miyasato S.R."/>
            <person name="Simison M."/>
            <person name="Cherry J.M."/>
        </authorList>
    </citation>
    <scope>GENOME REANNOTATION</scope>
    <source>
        <strain>ATCC 204508 / S288c</strain>
    </source>
</reference>
<reference key="4">
    <citation type="journal article" date="2007" name="Genome Res.">
        <title>Approaching a complete repository of sequence-verified protein-encoding clones for Saccharomyces cerevisiae.</title>
        <authorList>
            <person name="Hu Y."/>
            <person name="Rolfs A."/>
            <person name="Bhullar B."/>
            <person name="Murthy T.V.S."/>
            <person name="Zhu C."/>
            <person name="Berger M.F."/>
            <person name="Camargo A.A."/>
            <person name="Kelley F."/>
            <person name="McCarron S."/>
            <person name="Jepson D."/>
            <person name="Richardson A."/>
            <person name="Raphael J."/>
            <person name="Moreira D."/>
            <person name="Taycher E."/>
            <person name="Zuo D."/>
            <person name="Mohr S."/>
            <person name="Kane M.F."/>
            <person name="Williamson J."/>
            <person name="Simpson A.J.G."/>
            <person name="Bulyk M.L."/>
            <person name="Harlow E."/>
            <person name="Marsischky G."/>
            <person name="Kolodner R.D."/>
            <person name="LaBaer J."/>
        </authorList>
    </citation>
    <scope>NUCLEOTIDE SEQUENCE [GENOMIC DNA]</scope>
    <source>
        <strain>ATCC 204508 / S288c</strain>
    </source>
</reference>
<reference key="5">
    <citation type="journal article" date="2003" name="Nature">
        <title>Global analysis of protein localization in budding yeast.</title>
        <authorList>
            <person name="Huh W.-K."/>
            <person name="Falvo J.V."/>
            <person name="Gerke L.C."/>
            <person name="Carroll A.S."/>
            <person name="Howson R.W."/>
            <person name="Weissman J.S."/>
            <person name="O'Shea E.K."/>
        </authorList>
    </citation>
    <scope>SUBCELLULAR LOCATION [LARGE SCALE ANALYSIS]</scope>
</reference>
<reference key="6">
    <citation type="journal article" date="2003" name="Nature">
        <title>Global analysis of protein expression in yeast.</title>
        <authorList>
            <person name="Ghaemmaghami S."/>
            <person name="Huh W.-K."/>
            <person name="Bower K."/>
            <person name="Howson R.W."/>
            <person name="Belle A."/>
            <person name="Dephoure N."/>
            <person name="O'Shea E.K."/>
            <person name="Weissman J.S."/>
        </authorList>
    </citation>
    <scope>LEVEL OF PROTEIN EXPRESSION [LARGE SCALE ANALYSIS]</scope>
</reference>
<reference key="7">
    <citation type="journal article" date="2003" name="Proc. Natl. Acad. Sci. U.S.A.">
        <title>The proteome of Saccharomyces cerevisiae mitochondria.</title>
        <authorList>
            <person name="Sickmann A."/>
            <person name="Reinders J."/>
            <person name="Wagner Y."/>
            <person name="Joppich C."/>
            <person name="Zahedi R.P."/>
            <person name="Meyer H.E."/>
            <person name="Schoenfisch B."/>
            <person name="Perschil I."/>
            <person name="Chacinska A."/>
            <person name="Guiard B."/>
            <person name="Rehling P."/>
            <person name="Pfanner N."/>
            <person name="Meisinger C."/>
        </authorList>
    </citation>
    <scope>SUBCELLULAR LOCATION [LARGE SCALE ANALYSIS]</scope>
</reference>
<reference key="8">
    <citation type="journal article" date="2011" name="J. Biol. Chem.">
        <title>Extremely conserved ATP- or ADP-dependent enzymatic system for nicotinamide nucleotide repair.</title>
        <authorList>
            <person name="Marbaix A.Y."/>
            <person name="Noel G."/>
            <person name="Detroux A.M."/>
            <person name="Vertommen D."/>
            <person name="Van Schaftingen E."/>
            <person name="Linster C.L."/>
        </authorList>
    </citation>
    <scope>FUNCTION</scope>
    <scope>CATALYTIC ACTIVITY</scope>
</reference>
<reference key="9">
    <citation type="journal article" date="2016" name="Plant Gene">
        <title>YPL260W, a high-copy suppressor of a copper-sensitive phenotype in yeast, is linked to DNA repair and proteasome function.</title>
        <authorList>
            <person name="Firestone K."/>
            <person name="Awonusi D."/>
            <person name="Panfair D."/>
            <person name="Roland D."/>
            <person name="Ramamurthy A."/>
            <person name="Kusmierczyk A.R."/>
        </authorList>
    </citation>
    <scope>IDENTIFICATION</scope>
</reference>
<reference key="10">
    <citation type="submission" date="2009-02" db="PDB data bank">
        <title>Crystal structure of yeast hypothetical protein YNU0_yeast.</title>
        <authorList>
            <consortium name="New York structural genomix research consortium (NYSGXRC)"/>
        </authorList>
    </citation>
    <scope>X-RAY CRYSTALLOGRAPHY (1.94 ANGSTROMS)</scope>
</reference>
<feature type="chain" id="PRO_0000119061" description="NAD(P)H-hydrate epimerase">
    <location>
        <begin position="1"/>
        <end position="246"/>
    </location>
</feature>
<feature type="domain" description="YjeF N-terminal" evidence="1">
    <location>
        <begin position="12"/>
        <end position="234"/>
    </location>
</feature>
<feature type="binding site" evidence="1">
    <location>
        <begin position="69"/>
        <end position="73"/>
    </location>
    <ligand>
        <name>(6S)-NADPHX</name>
        <dbReference type="ChEBI" id="CHEBI:64076"/>
    </ligand>
</feature>
<feature type="binding site" evidence="1">
    <location>
        <position position="70"/>
    </location>
    <ligand>
        <name>K(+)</name>
        <dbReference type="ChEBI" id="CHEBI:29103"/>
    </ligand>
</feature>
<feature type="binding site" evidence="1">
    <location>
        <position position="138"/>
    </location>
    <ligand>
        <name>K(+)</name>
        <dbReference type="ChEBI" id="CHEBI:29103"/>
    </ligand>
</feature>
<feature type="binding site" evidence="1">
    <location>
        <begin position="142"/>
        <end position="148"/>
    </location>
    <ligand>
        <name>(6S)-NADPHX</name>
        <dbReference type="ChEBI" id="CHEBI:64076"/>
    </ligand>
</feature>
<feature type="binding site" evidence="1">
    <location>
        <position position="173"/>
    </location>
    <ligand>
        <name>(6S)-NADPHX</name>
        <dbReference type="ChEBI" id="CHEBI:64076"/>
    </ligand>
</feature>
<feature type="binding site" evidence="1">
    <location>
        <position position="176"/>
    </location>
    <ligand>
        <name>K(+)</name>
        <dbReference type="ChEBI" id="CHEBI:29103"/>
    </ligand>
</feature>
<feature type="helix" evidence="5">
    <location>
        <begin position="9"/>
        <end position="19"/>
    </location>
</feature>
<feature type="turn" evidence="5">
    <location>
        <begin position="22"/>
        <end position="24"/>
    </location>
</feature>
<feature type="helix" evidence="5">
    <location>
        <begin position="28"/>
        <end position="46"/>
    </location>
</feature>
<feature type="helix" evidence="5">
    <location>
        <begin position="54"/>
        <end position="57"/>
    </location>
</feature>
<feature type="strand" evidence="5">
    <location>
        <begin position="60"/>
        <end position="65"/>
    </location>
</feature>
<feature type="helix" evidence="5">
    <location>
        <begin position="69"/>
        <end position="83"/>
    </location>
</feature>
<feature type="strand" evidence="5">
    <location>
        <begin position="88"/>
        <end position="91"/>
    </location>
</feature>
<feature type="helix" evidence="5">
    <location>
        <begin position="100"/>
        <end position="111"/>
    </location>
</feature>
<feature type="helix" evidence="5">
    <location>
        <begin position="124"/>
        <end position="128"/>
    </location>
</feature>
<feature type="turn" evidence="5">
    <location>
        <begin position="130"/>
        <end position="132"/>
    </location>
</feature>
<feature type="strand" evidence="5">
    <location>
        <begin position="133"/>
        <end position="140"/>
    </location>
</feature>
<feature type="helix" evidence="5">
    <location>
        <begin position="153"/>
        <end position="163"/>
    </location>
</feature>
<feature type="turn" evidence="5">
    <location>
        <begin position="164"/>
        <end position="166"/>
    </location>
</feature>
<feature type="strand" evidence="5">
    <location>
        <begin position="169"/>
        <end position="174"/>
    </location>
</feature>
<feature type="turn" evidence="5">
    <location>
        <begin position="180"/>
        <end position="182"/>
    </location>
</feature>
<feature type="strand" evidence="5">
    <location>
        <begin position="186"/>
        <end position="188"/>
    </location>
</feature>
<feature type="strand" evidence="5">
    <location>
        <begin position="193"/>
        <end position="200"/>
    </location>
</feature>
<feature type="helix" evidence="5">
    <location>
        <begin position="203"/>
        <end position="207"/>
    </location>
</feature>
<feature type="turn" evidence="5">
    <location>
        <begin position="210"/>
        <end position="212"/>
    </location>
</feature>
<feature type="strand" evidence="5">
    <location>
        <begin position="214"/>
        <end position="218"/>
    </location>
</feature>
<feature type="helix" evidence="5">
    <location>
        <begin position="224"/>
        <end position="229"/>
    </location>
</feature>
<feature type="strand" evidence="5">
    <location>
        <begin position="242"/>
        <end position="245"/>
    </location>
</feature>
<proteinExistence type="evidence at protein level"/>
<keyword id="KW-0002">3D-structure</keyword>
<keyword id="KW-0963">Cytoplasm</keyword>
<keyword id="KW-0413">Isomerase</keyword>
<keyword id="KW-0479">Metal-binding</keyword>
<keyword id="KW-0496">Mitochondrion</keyword>
<keyword id="KW-0520">NAD</keyword>
<keyword id="KW-0521">NADP</keyword>
<keyword id="KW-0547">Nucleotide-binding</keyword>
<keyword id="KW-0630">Potassium</keyword>
<keyword id="KW-1185">Reference proteome</keyword>
<dbReference type="EC" id="5.1.99.6" evidence="3"/>
<dbReference type="EMBL" id="X78898">
    <property type="protein sequence ID" value="CAA55508.1"/>
    <property type="molecule type" value="Genomic_DNA"/>
</dbReference>
<dbReference type="EMBL" id="Z71476">
    <property type="protein sequence ID" value="CAA96099.1"/>
    <property type="molecule type" value="Genomic_DNA"/>
</dbReference>
<dbReference type="EMBL" id="AY692583">
    <property type="protein sequence ID" value="AAT92602.1"/>
    <property type="molecule type" value="Genomic_DNA"/>
</dbReference>
<dbReference type="EMBL" id="BK006947">
    <property type="protein sequence ID" value="DAA10354.1"/>
    <property type="molecule type" value="Genomic_DNA"/>
</dbReference>
<dbReference type="PIR" id="S50731">
    <property type="entry name" value="S50731"/>
</dbReference>
<dbReference type="RefSeq" id="NP_014199.1">
    <property type="nucleotide sequence ID" value="NM_001183038.1"/>
</dbReference>
<dbReference type="PDB" id="1JZT">
    <property type="method" value="X-ray"/>
    <property type="resolution" value="1.94 A"/>
    <property type="chains" value="A/B=1-246"/>
</dbReference>
<dbReference type="PDBsum" id="1JZT"/>
<dbReference type="SMR" id="P40165"/>
<dbReference type="BioGRID" id="35634">
    <property type="interactions" value="26"/>
</dbReference>
<dbReference type="FunCoup" id="P40165">
    <property type="interactions" value="376"/>
</dbReference>
<dbReference type="STRING" id="4932.YNL200C"/>
<dbReference type="PaxDb" id="4932-YNL200C"/>
<dbReference type="PeptideAtlas" id="P40165"/>
<dbReference type="EnsemblFungi" id="YNL200C_mRNA">
    <property type="protein sequence ID" value="YNL200C"/>
    <property type="gene ID" value="YNL200C"/>
</dbReference>
<dbReference type="GeneID" id="855521"/>
<dbReference type="KEGG" id="sce:YNL200C"/>
<dbReference type="AGR" id="SGD:S000005144"/>
<dbReference type="SGD" id="S000005144">
    <property type="gene designation" value="NNR1"/>
</dbReference>
<dbReference type="VEuPathDB" id="FungiDB:YNL200C"/>
<dbReference type="eggNOG" id="KOG2585">
    <property type="taxonomic scope" value="Eukaryota"/>
</dbReference>
<dbReference type="GeneTree" id="ENSGT00390000007227"/>
<dbReference type="HOGENOM" id="CLU_024853_3_0_1"/>
<dbReference type="InParanoid" id="P40165"/>
<dbReference type="OMA" id="RHLFHYG"/>
<dbReference type="OrthoDB" id="10064708at2759"/>
<dbReference type="BioCyc" id="YEAST:G3O-33209-MONOMER"/>
<dbReference type="Reactome" id="R-SCE-197264">
    <property type="pathway name" value="Nicotinamide salvaging"/>
</dbReference>
<dbReference type="BioGRID-ORCS" id="855521">
    <property type="hits" value="1 hit in 10 CRISPR screens"/>
</dbReference>
<dbReference type="EvolutionaryTrace" id="P40165"/>
<dbReference type="PRO" id="PR:P40165"/>
<dbReference type="Proteomes" id="UP000002311">
    <property type="component" value="Chromosome XIV"/>
</dbReference>
<dbReference type="RNAct" id="P40165">
    <property type="molecule type" value="protein"/>
</dbReference>
<dbReference type="GO" id="GO:0005737">
    <property type="term" value="C:cytoplasm"/>
    <property type="evidence" value="ECO:0007005"/>
    <property type="project" value="SGD"/>
</dbReference>
<dbReference type="GO" id="GO:0005739">
    <property type="term" value="C:mitochondrion"/>
    <property type="evidence" value="ECO:0007005"/>
    <property type="project" value="SGD"/>
</dbReference>
<dbReference type="GO" id="GO:0046872">
    <property type="term" value="F:metal ion binding"/>
    <property type="evidence" value="ECO:0007669"/>
    <property type="project" value="UniProtKB-KW"/>
</dbReference>
<dbReference type="GO" id="GO:0052856">
    <property type="term" value="F:NAD(P)HX epimerase activity"/>
    <property type="evidence" value="ECO:0000314"/>
    <property type="project" value="SGD"/>
</dbReference>
<dbReference type="GO" id="GO:0000166">
    <property type="term" value="F:nucleotide binding"/>
    <property type="evidence" value="ECO:0007669"/>
    <property type="project" value="UniProtKB-KW"/>
</dbReference>
<dbReference type="GO" id="GO:0046496">
    <property type="term" value="P:nicotinamide nucleotide metabolic process"/>
    <property type="evidence" value="ECO:0000314"/>
    <property type="project" value="SGD"/>
</dbReference>
<dbReference type="FunFam" id="3.40.50.10260:FF:000005">
    <property type="entry name" value="NAD(P)H-hydrate epimerase"/>
    <property type="match status" value="1"/>
</dbReference>
<dbReference type="Gene3D" id="3.40.50.10260">
    <property type="entry name" value="YjeF N-terminal domain"/>
    <property type="match status" value="1"/>
</dbReference>
<dbReference type="HAMAP" id="MF_01966">
    <property type="entry name" value="NADHX_epimerase"/>
    <property type="match status" value="1"/>
</dbReference>
<dbReference type="InterPro" id="IPR004443">
    <property type="entry name" value="YjeF_N_dom"/>
</dbReference>
<dbReference type="InterPro" id="IPR036652">
    <property type="entry name" value="YjeF_N_dom_sf"/>
</dbReference>
<dbReference type="InterPro" id="IPR032976">
    <property type="entry name" value="YJEFN_prot_NAXE-like"/>
</dbReference>
<dbReference type="NCBIfam" id="TIGR00197">
    <property type="entry name" value="yjeF_nterm"/>
    <property type="match status" value="1"/>
</dbReference>
<dbReference type="PANTHER" id="PTHR13232">
    <property type="entry name" value="NAD(P)H-HYDRATE EPIMERASE"/>
    <property type="match status" value="1"/>
</dbReference>
<dbReference type="PANTHER" id="PTHR13232:SF10">
    <property type="entry name" value="NAD(P)H-HYDRATE EPIMERASE"/>
    <property type="match status" value="1"/>
</dbReference>
<dbReference type="Pfam" id="PF03853">
    <property type="entry name" value="YjeF_N"/>
    <property type="match status" value="1"/>
</dbReference>
<dbReference type="SUPFAM" id="SSF64153">
    <property type="entry name" value="YjeF N-terminal domain-like"/>
    <property type="match status" value="1"/>
</dbReference>
<dbReference type="PROSITE" id="PS51385">
    <property type="entry name" value="YJEF_N"/>
    <property type="match status" value="1"/>
</dbReference>
<comment type="function">
    <text evidence="1 3">Catalyzes the epimerization of the S- and R-forms of NAD(P)HX, a damaged form of NAD(P)H that is a result of enzymatic or heat-dependent hydration. This is a prerequisite for the S-specific NAD(P)H-hydrate dehydratase to allow the repair of both epimers of NAD(P)HX.</text>
</comment>
<comment type="catalytic activity">
    <reaction evidence="3">
        <text>(6R)-NADHX = (6S)-NADHX</text>
        <dbReference type="Rhea" id="RHEA:32215"/>
        <dbReference type="ChEBI" id="CHEBI:64074"/>
        <dbReference type="ChEBI" id="CHEBI:64075"/>
        <dbReference type="EC" id="5.1.99.6"/>
    </reaction>
</comment>
<comment type="catalytic activity">
    <reaction evidence="3">
        <text>(6R)-NADPHX = (6S)-NADPHX</text>
        <dbReference type="Rhea" id="RHEA:32227"/>
        <dbReference type="ChEBI" id="CHEBI:64076"/>
        <dbReference type="ChEBI" id="CHEBI:64077"/>
        <dbReference type="EC" id="5.1.99.6"/>
    </reaction>
</comment>
<comment type="cofactor">
    <cofactor evidence="1">
        <name>K(+)</name>
        <dbReference type="ChEBI" id="CHEBI:29103"/>
    </cofactor>
    <text evidence="1">Binds 1 potassium ion per subunit.</text>
</comment>
<comment type="subcellular location">
    <subcellularLocation>
        <location>Cytoplasm</location>
    </subcellularLocation>
    <subcellularLocation>
        <location>Mitochondrion</location>
    </subcellularLocation>
</comment>
<comment type="miscellaneous">
    <text evidence="2">Present with 1380 molecules/cell in log phase SD medium.</text>
</comment>
<comment type="similarity">
    <text evidence="1">Belongs to the NnrE/AIBP family.</text>
</comment>